<keyword id="KW-1185">Reference proteome</keyword>
<proteinExistence type="inferred from homology"/>
<accession>Q1G950</accession>
<reference key="1">
    <citation type="journal article" date="2006" name="Proc. Natl. Acad. Sci. U.S.A.">
        <title>The complete genome sequence of Lactobacillus bulgaricus reveals extensive and ongoing reductive evolution.</title>
        <authorList>
            <person name="van de Guchte M."/>
            <person name="Penaud S."/>
            <person name="Grimaldi C."/>
            <person name="Barbe V."/>
            <person name="Bryson K."/>
            <person name="Nicolas P."/>
            <person name="Robert C."/>
            <person name="Oztas S."/>
            <person name="Mangenot S."/>
            <person name="Couloux A."/>
            <person name="Loux V."/>
            <person name="Dervyn R."/>
            <person name="Bossy R."/>
            <person name="Bolotin A."/>
            <person name="Batto J.-M."/>
            <person name="Walunas T."/>
            <person name="Gibrat J.-F."/>
            <person name="Bessieres P."/>
            <person name="Weissenbach J."/>
            <person name="Ehrlich S.D."/>
            <person name="Maguin E."/>
        </authorList>
    </citation>
    <scope>NUCLEOTIDE SEQUENCE [LARGE SCALE GENOMIC DNA]</scope>
    <source>
        <strain>ATCC 11842 / DSM 20081 / BCRC 10696 / JCM 1002 / NBRC 13953 / NCIMB 11778 / NCTC 12712 / WDCM 00102 / Lb 14</strain>
    </source>
</reference>
<protein>
    <recommendedName>
        <fullName evidence="1">UPF0473 protein Ldb1604</fullName>
    </recommendedName>
</protein>
<evidence type="ECO:0000255" key="1">
    <source>
        <dbReference type="HAMAP-Rule" id="MF_01448"/>
    </source>
</evidence>
<comment type="similarity">
    <text evidence="1">Belongs to the UPF0473 family.</text>
</comment>
<dbReference type="EMBL" id="CR954253">
    <property type="protein sequence ID" value="CAI98393.1"/>
    <property type="molecule type" value="Genomic_DNA"/>
</dbReference>
<dbReference type="RefSeq" id="WP_002876576.1">
    <property type="nucleotide sequence ID" value="NZ_JQAV01000002.1"/>
</dbReference>
<dbReference type="STRING" id="390333.Ldb1604"/>
<dbReference type="KEGG" id="ldb:Ldb1604"/>
<dbReference type="PATRIC" id="fig|390333.13.peg.1020"/>
<dbReference type="eggNOG" id="COG3906">
    <property type="taxonomic scope" value="Bacteria"/>
</dbReference>
<dbReference type="HOGENOM" id="CLU_146610_2_1_9"/>
<dbReference type="BioCyc" id="LDEL390333:LDB_RS06925-MONOMER"/>
<dbReference type="Proteomes" id="UP000001259">
    <property type="component" value="Chromosome"/>
</dbReference>
<dbReference type="HAMAP" id="MF_01448">
    <property type="entry name" value="UPF0473"/>
    <property type="match status" value="1"/>
</dbReference>
<dbReference type="InterPro" id="IPR018247">
    <property type="entry name" value="EF_Hand_1_Ca_BS"/>
</dbReference>
<dbReference type="InterPro" id="IPR009711">
    <property type="entry name" value="UPF0473"/>
</dbReference>
<dbReference type="NCBIfam" id="NF010217">
    <property type="entry name" value="PRK13678.1-4"/>
    <property type="match status" value="1"/>
</dbReference>
<dbReference type="PANTHER" id="PTHR40066">
    <property type="entry name" value="UPF0473 PROTEIN CBO2561/CLC_2432"/>
    <property type="match status" value="1"/>
</dbReference>
<dbReference type="PANTHER" id="PTHR40066:SF1">
    <property type="entry name" value="UPF0473 PROTEIN CBO2561_CLC_2432"/>
    <property type="match status" value="1"/>
</dbReference>
<dbReference type="Pfam" id="PF06949">
    <property type="entry name" value="DUF1292"/>
    <property type="match status" value="1"/>
</dbReference>
<organism>
    <name type="scientific">Lactobacillus delbrueckii subsp. bulgaricus (strain ATCC 11842 / DSM 20081 / BCRC 10696 / JCM 1002 / NBRC 13953 / NCIMB 11778 / NCTC 12712 / WDCM 00102 / Lb 14)</name>
    <dbReference type="NCBI Taxonomy" id="390333"/>
    <lineage>
        <taxon>Bacteria</taxon>
        <taxon>Bacillati</taxon>
        <taxon>Bacillota</taxon>
        <taxon>Bacilli</taxon>
        <taxon>Lactobacillales</taxon>
        <taxon>Lactobacillaceae</taxon>
        <taxon>Lactobacillus</taxon>
    </lineage>
</organism>
<gene>
    <name type="ordered locus">Ldb1604</name>
</gene>
<feature type="chain" id="PRO_0000304835" description="UPF0473 protein Ldb1604">
    <location>
        <begin position="1"/>
        <end position="107"/>
    </location>
</feature>
<name>Y1604_LACDA</name>
<sequence>MAFEVSAEDQDRQLTLIDEDGNEELFEVLFTFHSDDNDKSYILLYPAAVEDDDEIEVQAFSYDADEDGDVTSSDLHEITSDAEWDMVQGVLNTFLEDDRLSGDDSAE</sequence>